<organism>
    <name type="scientific">Staphylococcus aureus (strain COL)</name>
    <dbReference type="NCBI Taxonomy" id="93062"/>
    <lineage>
        <taxon>Bacteria</taxon>
        <taxon>Bacillati</taxon>
        <taxon>Bacillota</taxon>
        <taxon>Bacilli</taxon>
        <taxon>Bacillales</taxon>
        <taxon>Staphylococcaceae</taxon>
        <taxon>Staphylococcus</taxon>
    </lineage>
</organism>
<reference key="1">
    <citation type="journal article" date="2005" name="J. Bacteriol.">
        <title>Insights on evolution of virulence and resistance from the complete genome analysis of an early methicillin-resistant Staphylococcus aureus strain and a biofilm-producing methicillin-resistant Staphylococcus epidermidis strain.</title>
        <authorList>
            <person name="Gill S.R."/>
            <person name="Fouts D.E."/>
            <person name="Archer G.L."/>
            <person name="Mongodin E.F."/>
            <person name="DeBoy R.T."/>
            <person name="Ravel J."/>
            <person name="Paulsen I.T."/>
            <person name="Kolonay J.F."/>
            <person name="Brinkac L.M."/>
            <person name="Beanan M.J."/>
            <person name="Dodson R.J."/>
            <person name="Daugherty S.C."/>
            <person name="Madupu R."/>
            <person name="Angiuoli S.V."/>
            <person name="Durkin A.S."/>
            <person name="Haft D.H."/>
            <person name="Vamathevan J.J."/>
            <person name="Khouri H."/>
            <person name="Utterback T.R."/>
            <person name="Lee C."/>
            <person name="Dimitrov G."/>
            <person name="Jiang L."/>
            <person name="Qin H."/>
            <person name="Weidman J."/>
            <person name="Tran K."/>
            <person name="Kang K.H."/>
            <person name="Hance I.R."/>
            <person name="Nelson K.E."/>
            <person name="Fraser C.M."/>
        </authorList>
    </citation>
    <scope>NUCLEOTIDE SEQUENCE [LARGE SCALE GENOMIC DNA]</scope>
    <source>
        <strain>COL</strain>
    </source>
</reference>
<evidence type="ECO:0000305" key="1"/>
<evidence type="ECO:0007829" key="2">
    <source>
        <dbReference type="PDB" id="5V0Z"/>
    </source>
</evidence>
<name>ATRF2_STAAC</name>
<feature type="chain" id="PRO_0000068752" description="Putative acetyltransferase SACOL2570">
    <location>
        <begin position="1"/>
        <end position="199"/>
    </location>
</feature>
<feature type="helix" evidence="2">
    <location>
        <begin position="3"/>
        <end position="8"/>
    </location>
</feature>
<feature type="turn" evidence="2">
    <location>
        <begin position="15"/>
        <end position="17"/>
    </location>
</feature>
<feature type="helix" evidence="2">
    <location>
        <begin position="19"/>
        <end position="36"/>
    </location>
</feature>
<feature type="helix" evidence="2">
    <location>
        <begin position="43"/>
        <end position="54"/>
    </location>
</feature>
<feature type="strand" evidence="2">
    <location>
        <begin position="59"/>
        <end position="63"/>
    </location>
</feature>
<feature type="strand" evidence="2">
    <location>
        <begin position="65"/>
        <end position="72"/>
    </location>
</feature>
<feature type="strand" evidence="2">
    <location>
        <begin position="75"/>
        <end position="77"/>
    </location>
</feature>
<feature type="strand" evidence="2">
    <location>
        <begin position="79"/>
        <end position="83"/>
    </location>
</feature>
<feature type="strand" evidence="2">
    <location>
        <begin position="85"/>
        <end position="90"/>
    </location>
</feature>
<feature type="strand" evidence="2">
    <location>
        <begin position="95"/>
        <end position="97"/>
    </location>
</feature>
<feature type="strand" evidence="2">
    <location>
        <begin position="99"/>
        <end position="103"/>
    </location>
</feature>
<feature type="strand" evidence="2">
    <location>
        <begin position="108"/>
        <end position="110"/>
    </location>
</feature>
<feature type="helix" evidence="2">
    <location>
        <begin position="118"/>
        <end position="121"/>
    </location>
</feature>
<feature type="turn" evidence="2">
    <location>
        <begin position="122"/>
        <end position="124"/>
    </location>
</feature>
<feature type="strand" evidence="2">
    <location>
        <begin position="126"/>
        <end position="128"/>
    </location>
</feature>
<feature type="strand" evidence="2">
    <location>
        <begin position="131"/>
        <end position="133"/>
    </location>
</feature>
<feature type="strand" evidence="2">
    <location>
        <begin position="135"/>
        <end position="139"/>
    </location>
</feature>
<feature type="strand" evidence="2">
    <location>
        <begin position="171"/>
        <end position="174"/>
    </location>
</feature>
<feature type="turn" evidence="2">
    <location>
        <begin position="175"/>
        <end position="178"/>
    </location>
</feature>
<feature type="strand" evidence="2">
    <location>
        <begin position="179"/>
        <end position="183"/>
    </location>
</feature>
<dbReference type="EC" id="2.3.1.-"/>
<dbReference type="EMBL" id="CP000046">
    <property type="protein sequence ID" value="AAW38572.1"/>
    <property type="molecule type" value="Genomic_DNA"/>
</dbReference>
<dbReference type="RefSeq" id="WP_000136500.1">
    <property type="nucleotide sequence ID" value="NZ_JBGOFO010000001.1"/>
</dbReference>
<dbReference type="PDB" id="3FTT">
    <property type="method" value="X-ray"/>
    <property type="resolution" value="1.60 A"/>
    <property type="chains" value="A=1-199"/>
</dbReference>
<dbReference type="PDB" id="3V4E">
    <property type="method" value="X-ray"/>
    <property type="resolution" value="1.95 A"/>
    <property type="chains" value="A/B/C=1-199"/>
</dbReference>
<dbReference type="PDB" id="4DCL">
    <property type="method" value="X-ray"/>
    <property type="resolution" value="3.35 A"/>
    <property type="chains" value="A=1-199"/>
</dbReference>
<dbReference type="PDB" id="4EGG">
    <property type="method" value="X-ray"/>
    <property type="resolution" value="2.21 A"/>
    <property type="chains" value="A/B/C/D/E/F=1-199"/>
</dbReference>
<dbReference type="PDB" id="5U2K">
    <property type="method" value="X-ray"/>
    <property type="resolution" value="1.38 A"/>
    <property type="chains" value="A=1-199"/>
</dbReference>
<dbReference type="PDB" id="5V0Z">
    <property type="method" value="X-ray"/>
    <property type="resolution" value="1.26 A"/>
    <property type="chains" value="A/B/C=1-199"/>
</dbReference>
<dbReference type="PDBsum" id="3FTT"/>
<dbReference type="PDBsum" id="3V4E"/>
<dbReference type="PDBsum" id="4DCL"/>
<dbReference type="PDBsum" id="4EGG"/>
<dbReference type="PDBsum" id="5U2K"/>
<dbReference type="PDBsum" id="5V0Z"/>
<dbReference type="SMR" id="Q5HCZ5"/>
<dbReference type="KEGG" id="sac:SACOL2570"/>
<dbReference type="HOGENOM" id="CLU_051638_3_0_9"/>
<dbReference type="BRENDA" id="2.3.1.18">
    <property type="organism ID" value="3352"/>
</dbReference>
<dbReference type="EvolutionaryTrace" id="Q5HCZ5"/>
<dbReference type="Proteomes" id="UP000000530">
    <property type="component" value="Chromosome"/>
</dbReference>
<dbReference type="GO" id="GO:0008870">
    <property type="term" value="F:galactoside O-acetyltransferase activity"/>
    <property type="evidence" value="ECO:0007669"/>
    <property type="project" value="TreeGrafter"/>
</dbReference>
<dbReference type="CDD" id="cd03357">
    <property type="entry name" value="LbH_MAT_GAT"/>
    <property type="match status" value="1"/>
</dbReference>
<dbReference type="FunFam" id="2.160.10.10:FF:000008">
    <property type="entry name" value="Maltose O-acetyltransferase"/>
    <property type="match status" value="1"/>
</dbReference>
<dbReference type="Gene3D" id="2.160.10.10">
    <property type="entry name" value="Hexapeptide repeat proteins"/>
    <property type="match status" value="1"/>
</dbReference>
<dbReference type="InterPro" id="IPR001451">
    <property type="entry name" value="Hexapep"/>
</dbReference>
<dbReference type="InterPro" id="IPR039369">
    <property type="entry name" value="LacA-like"/>
</dbReference>
<dbReference type="InterPro" id="IPR024688">
    <property type="entry name" value="Mac_dom"/>
</dbReference>
<dbReference type="InterPro" id="IPR011004">
    <property type="entry name" value="Trimer_LpxA-like_sf"/>
</dbReference>
<dbReference type="PANTHER" id="PTHR43017:SF1">
    <property type="entry name" value="ACETYLTRANSFERASE YJL218W-RELATED"/>
    <property type="match status" value="1"/>
</dbReference>
<dbReference type="PANTHER" id="PTHR43017">
    <property type="entry name" value="GALACTOSIDE O-ACETYLTRANSFERASE"/>
    <property type="match status" value="1"/>
</dbReference>
<dbReference type="Pfam" id="PF00132">
    <property type="entry name" value="Hexapep"/>
    <property type="match status" value="1"/>
</dbReference>
<dbReference type="Pfam" id="PF14602">
    <property type="entry name" value="Hexapep_2"/>
    <property type="match status" value="1"/>
</dbReference>
<dbReference type="Pfam" id="PF12464">
    <property type="entry name" value="Mac"/>
    <property type="match status" value="1"/>
</dbReference>
<dbReference type="SMART" id="SM01266">
    <property type="entry name" value="Mac"/>
    <property type="match status" value="1"/>
</dbReference>
<dbReference type="SUPFAM" id="SSF51161">
    <property type="entry name" value="Trimeric LpxA-like enzymes"/>
    <property type="match status" value="1"/>
</dbReference>
<accession>Q5HCZ5</accession>
<proteinExistence type="evidence at protein level"/>
<comment type="similarity">
    <text evidence="1">Belongs to the transferase hexapeptide repeat family.</text>
</comment>
<keyword id="KW-0002">3D-structure</keyword>
<keyword id="KW-0012">Acyltransferase</keyword>
<keyword id="KW-0677">Repeat</keyword>
<keyword id="KW-0808">Transferase</keyword>
<protein>
    <recommendedName>
        <fullName>Putative acetyltransferase SACOL2570</fullName>
        <ecNumber>2.3.1.-</ecNumber>
    </recommendedName>
</protein>
<gene>
    <name type="ordered locus">SACOL2570</name>
</gene>
<sequence>MTEKEKMLAEKWYDANFDQYLINERARAKDICFELNHTRPSATNKRKELIDQLFQTTTDNVSISIPFDTDYGWNVKLGKNVYVNTNCYFMDGGQITIGDNVFIGPNCGFYTATHPLNFHHRNEGFEKAGPIHIGSNTWFGGHVAVLPGVTIGEGSVIGAGSVVTKDIPPHSLAVGNPCKVVRKIDNDLPSETLNDETIK</sequence>